<keyword id="KW-1003">Cell membrane</keyword>
<keyword id="KW-0472">Membrane</keyword>
<keyword id="KW-1185">Reference proteome</keyword>
<keyword id="KW-0812">Transmembrane</keyword>
<keyword id="KW-1133">Transmembrane helix</keyword>
<name>Y1367_PSYIN</name>
<evidence type="ECO:0000255" key="1">
    <source>
        <dbReference type="HAMAP-Rule" id="MF_01515"/>
    </source>
</evidence>
<comment type="subcellular location">
    <subcellularLocation>
        <location evidence="1">Cell membrane</location>
        <topology evidence="1">Multi-pass membrane protein</topology>
    </subcellularLocation>
</comment>
<comment type="similarity">
    <text evidence="1">Belongs to the UPF0316 family.</text>
</comment>
<sequence length="179" mass="20084">MPLVFFARVADVSLGTFRTIVIFRGHKFLASFIGFFEIIIWLVASAQVLTNLDQWYLALAYASGFSVGNYAGISIENRFAIGNELIRCISFNRDVLAGKLREEGFKVVSFDGDMGEAYPVELLLVIEKRRNVPSLIQLIKDLDPTAVYSVSDVKSVYEGPDIFPRRSLLHSTLMLLGKR</sequence>
<reference key="1">
    <citation type="journal article" date="2008" name="BMC Genomics">
        <title>Genomics of an extreme psychrophile, Psychromonas ingrahamii.</title>
        <authorList>
            <person name="Riley M."/>
            <person name="Staley J.T."/>
            <person name="Danchin A."/>
            <person name="Wang T.Z."/>
            <person name="Brettin T.S."/>
            <person name="Hauser L.J."/>
            <person name="Land M.L."/>
            <person name="Thompson L.S."/>
        </authorList>
    </citation>
    <scope>NUCLEOTIDE SEQUENCE [LARGE SCALE GENOMIC DNA]</scope>
    <source>
        <strain>DSM 17664 / CCUG 51855 / 37</strain>
    </source>
</reference>
<gene>
    <name type="ordered locus">Ping_1367</name>
</gene>
<accession>A1SUM3</accession>
<protein>
    <recommendedName>
        <fullName evidence="1">UPF0316 protein Ping_1367</fullName>
    </recommendedName>
</protein>
<feature type="chain" id="PRO_0000294266" description="UPF0316 protein Ping_1367">
    <location>
        <begin position="1"/>
        <end position="179"/>
    </location>
</feature>
<feature type="transmembrane region" description="Helical" evidence="1">
    <location>
        <begin position="28"/>
        <end position="48"/>
    </location>
</feature>
<feature type="transmembrane region" description="Helical" evidence="1">
    <location>
        <begin position="55"/>
        <end position="75"/>
    </location>
</feature>
<dbReference type="EMBL" id="CP000510">
    <property type="protein sequence ID" value="ABM03188.1"/>
    <property type="molecule type" value="Genomic_DNA"/>
</dbReference>
<dbReference type="SMR" id="A1SUM3"/>
<dbReference type="STRING" id="357804.Ping_1367"/>
<dbReference type="KEGG" id="pin:Ping_1367"/>
<dbReference type="eggNOG" id="COG4843">
    <property type="taxonomic scope" value="Bacteria"/>
</dbReference>
<dbReference type="HOGENOM" id="CLU_106166_0_0_6"/>
<dbReference type="Proteomes" id="UP000000639">
    <property type="component" value="Chromosome"/>
</dbReference>
<dbReference type="GO" id="GO:0005886">
    <property type="term" value="C:plasma membrane"/>
    <property type="evidence" value="ECO:0007669"/>
    <property type="project" value="UniProtKB-SubCell"/>
</dbReference>
<dbReference type="CDD" id="cd16381">
    <property type="entry name" value="YitT_C_like_1"/>
    <property type="match status" value="1"/>
</dbReference>
<dbReference type="HAMAP" id="MF_01515">
    <property type="entry name" value="UPF0316"/>
    <property type="match status" value="1"/>
</dbReference>
<dbReference type="InterPro" id="IPR019264">
    <property type="entry name" value="DUF2179"/>
</dbReference>
<dbReference type="InterPro" id="IPR044035">
    <property type="entry name" value="DUF5698"/>
</dbReference>
<dbReference type="InterPro" id="IPR022930">
    <property type="entry name" value="UPF0316"/>
</dbReference>
<dbReference type="NCBIfam" id="NF003191">
    <property type="entry name" value="PRK04164.1-2"/>
    <property type="match status" value="1"/>
</dbReference>
<dbReference type="PANTHER" id="PTHR40060">
    <property type="entry name" value="UPF0316 PROTEIN YEBE"/>
    <property type="match status" value="1"/>
</dbReference>
<dbReference type="PANTHER" id="PTHR40060:SF1">
    <property type="entry name" value="UPF0316 PROTEIN YEBE"/>
    <property type="match status" value="1"/>
</dbReference>
<dbReference type="Pfam" id="PF10035">
    <property type="entry name" value="DUF2179"/>
    <property type="match status" value="1"/>
</dbReference>
<dbReference type="Pfam" id="PF18955">
    <property type="entry name" value="DUF5698"/>
    <property type="match status" value="1"/>
</dbReference>
<proteinExistence type="inferred from homology"/>
<organism>
    <name type="scientific">Psychromonas ingrahamii (strain DSM 17664 / CCUG 51855 / 37)</name>
    <dbReference type="NCBI Taxonomy" id="357804"/>
    <lineage>
        <taxon>Bacteria</taxon>
        <taxon>Pseudomonadati</taxon>
        <taxon>Pseudomonadota</taxon>
        <taxon>Gammaproteobacteria</taxon>
        <taxon>Alteromonadales</taxon>
        <taxon>Psychromonadaceae</taxon>
        <taxon>Psychromonas</taxon>
    </lineage>
</organism>